<name>U79B9_ARATH</name>
<reference key="1">
    <citation type="journal article" date="1997" name="DNA Res.">
        <title>Structural analysis of Arabidopsis thaliana chromosome 5. III. Sequence features of the regions of 1,191,918 bp covered by seventeen physically assigned P1 clones.</title>
        <authorList>
            <person name="Nakamura Y."/>
            <person name="Sato S."/>
            <person name="Kaneko T."/>
            <person name="Kotani H."/>
            <person name="Asamizu E."/>
            <person name="Miyajima N."/>
            <person name="Tabata S."/>
        </authorList>
    </citation>
    <scope>NUCLEOTIDE SEQUENCE [LARGE SCALE GENOMIC DNA]</scope>
    <source>
        <strain>cv. Columbia</strain>
    </source>
</reference>
<reference key="2">
    <citation type="journal article" date="2017" name="Plant J.">
        <title>Araport11: a complete reannotation of the Arabidopsis thaliana reference genome.</title>
        <authorList>
            <person name="Cheng C.Y."/>
            <person name="Krishnakumar V."/>
            <person name="Chan A.P."/>
            <person name="Thibaud-Nissen F."/>
            <person name="Schobel S."/>
            <person name="Town C.D."/>
        </authorList>
    </citation>
    <scope>GENOME REANNOTATION</scope>
    <source>
        <strain>cv. Columbia</strain>
    </source>
</reference>
<reference key="3">
    <citation type="journal article" date="2003" name="Science">
        <title>Empirical analysis of transcriptional activity in the Arabidopsis genome.</title>
        <authorList>
            <person name="Yamada K."/>
            <person name="Lim J."/>
            <person name="Dale J.M."/>
            <person name="Chen H."/>
            <person name="Shinn P."/>
            <person name="Palm C.J."/>
            <person name="Southwick A.M."/>
            <person name="Wu H.C."/>
            <person name="Kim C.J."/>
            <person name="Nguyen M."/>
            <person name="Pham P.K."/>
            <person name="Cheuk R.F."/>
            <person name="Karlin-Newmann G."/>
            <person name="Liu S.X."/>
            <person name="Lam B."/>
            <person name="Sakano H."/>
            <person name="Wu T."/>
            <person name="Yu G."/>
            <person name="Miranda M."/>
            <person name="Quach H.L."/>
            <person name="Tripp M."/>
            <person name="Chang C.H."/>
            <person name="Lee J.M."/>
            <person name="Toriumi M.J."/>
            <person name="Chan M.M."/>
            <person name="Tang C.C."/>
            <person name="Onodera C.S."/>
            <person name="Deng J.M."/>
            <person name="Akiyama K."/>
            <person name="Ansari Y."/>
            <person name="Arakawa T."/>
            <person name="Banh J."/>
            <person name="Banno F."/>
            <person name="Bowser L."/>
            <person name="Brooks S.Y."/>
            <person name="Carninci P."/>
            <person name="Chao Q."/>
            <person name="Choy N."/>
            <person name="Enju A."/>
            <person name="Goldsmith A.D."/>
            <person name="Gurjal M."/>
            <person name="Hansen N.F."/>
            <person name="Hayashizaki Y."/>
            <person name="Johnson-Hopson C."/>
            <person name="Hsuan V.W."/>
            <person name="Iida K."/>
            <person name="Karnes M."/>
            <person name="Khan S."/>
            <person name="Koesema E."/>
            <person name="Ishida J."/>
            <person name="Jiang P.X."/>
            <person name="Jones T."/>
            <person name="Kawai J."/>
            <person name="Kamiya A."/>
            <person name="Meyers C."/>
            <person name="Nakajima M."/>
            <person name="Narusaka M."/>
            <person name="Seki M."/>
            <person name="Sakurai T."/>
            <person name="Satou M."/>
            <person name="Tamse R."/>
            <person name="Vaysberg M."/>
            <person name="Wallender E.K."/>
            <person name="Wong C."/>
            <person name="Yamamura Y."/>
            <person name="Yuan S."/>
            <person name="Shinozaki K."/>
            <person name="Davis R.W."/>
            <person name="Theologis A."/>
            <person name="Ecker J.R."/>
        </authorList>
    </citation>
    <scope>NUCLEOTIDE SEQUENCE [LARGE SCALE MRNA]</scope>
    <source>
        <strain>cv. Columbia</strain>
    </source>
</reference>
<reference key="4">
    <citation type="journal article" date="2001" name="J. Biol. Chem.">
        <title>Phylogenetic analysis of the UDP-glycosyltransferase multigene family of Arabidopsis thaliana.</title>
        <authorList>
            <person name="Li Y."/>
            <person name="Baldauf S."/>
            <person name="Lim E.K."/>
            <person name="Bowles D.J."/>
        </authorList>
    </citation>
    <scope>GENE FAMILY</scope>
</reference>
<keyword id="KW-0328">Glycosyltransferase</keyword>
<keyword id="KW-1185">Reference proteome</keyword>
<keyword id="KW-0808">Transferase</keyword>
<comment type="similarity">
    <text evidence="2">Belongs to the UDP-glycosyltransferase family.</text>
</comment>
<feature type="chain" id="PRO_0000409115" description="UDP-glycosyltransferase 79B9">
    <location>
        <begin position="1"/>
        <end position="447"/>
    </location>
</feature>
<feature type="binding site" evidence="1">
    <location>
        <position position="260"/>
    </location>
    <ligand>
        <name>UDP-alpha-D-glucose</name>
        <dbReference type="ChEBI" id="CHEBI:58885"/>
    </ligand>
</feature>
<feature type="binding site" evidence="1">
    <location>
        <begin position="319"/>
        <end position="321"/>
    </location>
    <ligand>
        <name>UDP-alpha-D-glucose</name>
        <dbReference type="ChEBI" id="CHEBI:58885"/>
    </ligand>
</feature>
<feature type="binding site" evidence="1">
    <location>
        <begin position="336"/>
        <end position="344"/>
    </location>
    <ligand>
        <name>UDP-alpha-D-glucose</name>
        <dbReference type="ChEBI" id="CHEBI:58885"/>
    </ligand>
</feature>
<feature type="binding site" evidence="1">
    <location>
        <begin position="358"/>
        <end position="361"/>
    </location>
    <ligand>
        <name>UDP-alpha-D-glucose</name>
        <dbReference type="ChEBI" id="CHEBI:58885"/>
    </ligand>
</feature>
<sequence>MGQNFHAFMFPWFAFGHMTPYLHLANKLAAKGHRVTFLLPKKAQKQLEHHNLFPDRIIFHSLTIPHVDGLPAGAETASDIPISLGKFLTAAMDLTRDQVEAAVRALRPDLIFFDTAYWVPEMAKEHRVKSVIYFVISANSIAHELVPGGELGVPPPGYPSSKVLYRGHDAHALLTFSIFYERLHYRITTGLKNCDFISIRTCKEIEGKFCDYIERQYQRKVLLTGPMLPEPDNSRPLEDRWNHWLNQFKPGSVIYCALGSQITLEKDQFQELCLGMELTGLPFLVAVKPPKGAKTIQEALPEGFEERVKNHGVVWGEWVQQPLILAHPSVGCFVTHCGFGSMWESLVSDCQIVLLPYLCDQILNTRLMSEELEVSVEVKREETGWFSKESLSVAITSVMDKDSELGNLVRRNHAKLKEVLVSPGLLTGYTDEFVETLQNIVNDTNLE</sequence>
<accession>Q9FN28</accession>
<dbReference type="EC" id="2.4.1.-"/>
<dbReference type="EMBL" id="AB007644">
    <property type="protein sequence ID" value="BAB10729.1"/>
    <property type="molecule type" value="Genomic_DNA"/>
</dbReference>
<dbReference type="EMBL" id="CP002688">
    <property type="protein sequence ID" value="AED96436.1"/>
    <property type="molecule type" value="Genomic_DNA"/>
</dbReference>
<dbReference type="EMBL" id="AY065439">
    <property type="protein sequence ID" value="AAL38880.1"/>
    <property type="molecule type" value="mRNA"/>
</dbReference>
<dbReference type="EMBL" id="AY096533">
    <property type="protein sequence ID" value="AAM20183.1"/>
    <property type="molecule type" value="mRNA"/>
</dbReference>
<dbReference type="RefSeq" id="NP_200210.1">
    <property type="nucleotide sequence ID" value="NM_124778.4"/>
</dbReference>
<dbReference type="SMR" id="Q9FN28"/>
<dbReference type="FunCoup" id="Q9FN28">
    <property type="interactions" value="49"/>
</dbReference>
<dbReference type="STRING" id="3702.Q9FN28"/>
<dbReference type="CAZy" id="GT1">
    <property type="family name" value="Glycosyltransferase Family 1"/>
</dbReference>
<dbReference type="PaxDb" id="3702-AT5G53990.1"/>
<dbReference type="ProteomicsDB" id="234644"/>
<dbReference type="EnsemblPlants" id="AT5G53990.1">
    <property type="protein sequence ID" value="AT5G53990.1"/>
    <property type="gene ID" value="AT5G53990"/>
</dbReference>
<dbReference type="GeneID" id="835482"/>
<dbReference type="Gramene" id="AT5G53990.1">
    <property type="protein sequence ID" value="AT5G53990.1"/>
    <property type="gene ID" value="AT5G53990"/>
</dbReference>
<dbReference type="KEGG" id="ath:AT5G53990"/>
<dbReference type="Araport" id="AT5G53990"/>
<dbReference type="TAIR" id="AT5G53990"/>
<dbReference type="eggNOG" id="KOG1192">
    <property type="taxonomic scope" value="Eukaryota"/>
</dbReference>
<dbReference type="HOGENOM" id="CLU_001724_2_3_1"/>
<dbReference type="InParanoid" id="Q9FN28"/>
<dbReference type="OMA" id="FYERLHY"/>
<dbReference type="OrthoDB" id="5835829at2759"/>
<dbReference type="PhylomeDB" id="Q9FN28"/>
<dbReference type="BioCyc" id="ARA:AT5G53990-MONOMER"/>
<dbReference type="PRO" id="PR:Q9FN28"/>
<dbReference type="Proteomes" id="UP000006548">
    <property type="component" value="Chromosome 5"/>
</dbReference>
<dbReference type="ExpressionAtlas" id="Q9FN28">
    <property type="expression patterns" value="baseline and differential"/>
</dbReference>
<dbReference type="GO" id="GO:0035251">
    <property type="term" value="F:UDP-glucosyltransferase activity"/>
    <property type="evidence" value="ECO:0007669"/>
    <property type="project" value="InterPro"/>
</dbReference>
<dbReference type="CDD" id="cd03784">
    <property type="entry name" value="GT1_Gtf-like"/>
    <property type="match status" value="1"/>
</dbReference>
<dbReference type="FunFam" id="3.40.50.2000:FF:000037">
    <property type="entry name" value="Glycosyltransferase"/>
    <property type="match status" value="1"/>
</dbReference>
<dbReference type="FunFam" id="3.40.50.2000:FF:000087">
    <property type="entry name" value="Glycosyltransferase"/>
    <property type="match status" value="1"/>
</dbReference>
<dbReference type="Gene3D" id="3.40.50.2000">
    <property type="entry name" value="Glycogen Phosphorylase B"/>
    <property type="match status" value="2"/>
</dbReference>
<dbReference type="InterPro" id="IPR050481">
    <property type="entry name" value="UDP-glycosyltransf_plant"/>
</dbReference>
<dbReference type="InterPro" id="IPR002213">
    <property type="entry name" value="UDP_glucos_trans"/>
</dbReference>
<dbReference type="InterPro" id="IPR035595">
    <property type="entry name" value="UDP_glycos_trans_CS"/>
</dbReference>
<dbReference type="PANTHER" id="PTHR48049">
    <property type="entry name" value="GLYCOSYLTRANSFERASE"/>
    <property type="match status" value="1"/>
</dbReference>
<dbReference type="PANTHER" id="PTHR48049:SF91">
    <property type="entry name" value="UDP-GLYCOSYLTRANSFERASE 79B7-RELATED"/>
    <property type="match status" value="1"/>
</dbReference>
<dbReference type="Pfam" id="PF00201">
    <property type="entry name" value="UDPGT"/>
    <property type="match status" value="1"/>
</dbReference>
<dbReference type="SUPFAM" id="SSF53756">
    <property type="entry name" value="UDP-Glycosyltransferase/glycogen phosphorylase"/>
    <property type="match status" value="1"/>
</dbReference>
<dbReference type="PROSITE" id="PS00375">
    <property type="entry name" value="UDPGT"/>
    <property type="match status" value="1"/>
</dbReference>
<proteinExistence type="evidence at transcript level"/>
<organism>
    <name type="scientific">Arabidopsis thaliana</name>
    <name type="common">Mouse-ear cress</name>
    <dbReference type="NCBI Taxonomy" id="3702"/>
    <lineage>
        <taxon>Eukaryota</taxon>
        <taxon>Viridiplantae</taxon>
        <taxon>Streptophyta</taxon>
        <taxon>Embryophyta</taxon>
        <taxon>Tracheophyta</taxon>
        <taxon>Spermatophyta</taxon>
        <taxon>Magnoliopsida</taxon>
        <taxon>eudicotyledons</taxon>
        <taxon>Gunneridae</taxon>
        <taxon>Pentapetalae</taxon>
        <taxon>rosids</taxon>
        <taxon>malvids</taxon>
        <taxon>Brassicales</taxon>
        <taxon>Brassicaceae</taxon>
        <taxon>Camelineae</taxon>
        <taxon>Arabidopsis</taxon>
    </lineage>
</organism>
<gene>
    <name type="primary">UGT79B9</name>
    <name type="ordered locus">At5g53990</name>
    <name type="ORF">K19P17.16</name>
</gene>
<evidence type="ECO:0000250" key="1"/>
<evidence type="ECO:0000305" key="2"/>
<protein>
    <recommendedName>
        <fullName>UDP-glycosyltransferase 79B9</fullName>
        <ecNumber>2.4.1.-</ecNumber>
    </recommendedName>
</protein>